<keyword id="KW-0966">Cell projection</keyword>
<keyword id="KW-1185">Reference proteome</keyword>
<keyword id="KW-0677">Repeat</keyword>
<comment type="function">
    <text evidence="1">As part of the intermicrovillar adhesion complex/IMAC plays a role in epithelial brush border differentiation, controlling microvilli organization and length. Acts as a light chain for MYO7B and is required for efficient targeting of the IMAC to the tips of border brush microvilli.</text>
</comment>
<comment type="subunit">
    <text evidence="1">Associates with the IMAC/intermicrovillar adhesion complex.</text>
</comment>
<comment type="subcellular location">
    <subcellularLocation>
        <location evidence="1">Cell projection</location>
        <location evidence="1">Microvillus</location>
    </subcellularLocation>
    <text evidence="1">Enriched at the distal tips of enterocyte microvilli.</text>
</comment>
<comment type="similarity">
    <text evidence="3">Belongs to the calmodulin family.</text>
</comment>
<sequence>MAKFLSQDAIQKFKECFSLYDKKGKGKIPAGDLLTVMRCLGTCPTPGEVTRHLQVHKIGKDGEVDFSTFLTIMYRQQKQEDPENEIMVAMLMSDKQKKGVIPLKELRAKLTQMGEKLTPEEVDDLLKGVKVGPDGMVKYEEFVRQITLPVPDY</sequence>
<evidence type="ECO:0000250" key="1">
    <source>
        <dbReference type="UniProtKB" id="Q96GE6"/>
    </source>
</evidence>
<evidence type="ECO:0000255" key="2">
    <source>
        <dbReference type="PROSITE-ProRule" id="PRU00448"/>
    </source>
</evidence>
<evidence type="ECO:0000305" key="3"/>
<name>CALL4_XENTR</name>
<protein>
    <recommendedName>
        <fullName>Calmodulin-like protein 4</fullName>
    </recommendedName>
</protein>
<dbReference type="EMBL" id="BC084515">
    <property type="protein sequence ID" value="AAH84515.1"/>
    <property type="molecule type" value="mRNA"/>
</dbReference>
<dbReference type="RefSeq" id="NP_001011117.1">
    <property type="nucleotide sequence ID" value="NM_001011117.2"/>
</dbReference>
<dbReference type="SMR" id="Q5XGC7"/>
<dbReference type="FunCoup" id="Q5XGC7">
    <property type="interactions" value="1236"/>
</dbReference>
<dbReference type="STRING" id="8364.ENSXETP00000030122"/>
<dbReference type="PaxDb" id="8364-ENSXETP00000017065"/>
<dbReference type="GeneID" id="496530"/>
<dbReference type="KEGG" id="xtr:496530"/>
<dbReference type="AGR" id="Xenbase:XB-GENE-5936220"/>
<dbReference type="CTD" id="91860"/>
<dbReference type="Xenbase" id="XB-GENE-5936220">
    <property type="gene designation" value="calml4"/>
</dbReference>
<dbReference type="eggNOG" id="KOG0027">
    <property type="taxonomic scope" value="Eukaryota"/>
</dbReference>
<dbReference type="HOGENOM" id="CLU_061288_2_0_1"/>
<dbReference type="InParanoid" id="Q5XGC7"/>
<dbReference type="OMA" id="HYEEFTK"/>
<dbReference type="OrthoDB" id="435273at2759"/>
<dbReference type="PhylomeDB" id="Q5XGC7"/>
<dbReference type="TreeFam" id="TF300912"/>
<dbReference type="Proteomes" id="UP000008143">
    <property type="component" value="Chromosome 3"/>
</dbReference>
<dbReference type="Bgee" id="ENSXETG00000007814">
    <property type="expression patterns" value="Expressed in mesonephros and 6 other cell types or tissues"/>
</dbReference>
<dbReference type="GO" id="GO:0005902">
    <property type="term" value="C:microvillus"/>
    <property type="evidence" value="ECO:0000250"/>
    <property type="project" value="UniProtKB"/>
</dbReference>
<dbReference type="GO" id="GO:0005509">
    <property type="term" value="F:calcium ion binding"/>
    <property type="evidence" value="ECO:0007669"/>
    <property type="project" value="InterPro"/>
</dbReference>
<dbReference type="GO" id="GO:1904970">
    <property type="term" value="P:brush border assembly"/>
    <property type="evidence" value="ECO:0000250"/>
    <property type="project" value="UniProtKB"/>
</dbReference>
<dbReference type="CDD" id="cd00051">
    <property type="entry name" value="EFh"/>
    <property type="match status" value="1"/>
</dbReference>
<dbReference type="FunFam" id="1.10.238.10:FF:000082">
    <property type="entry name" value="Myosin light chain 1"/>
    <property type="match status" value="1"/>
</dbReference>
<dbReference type="FunFam" id="1.10.238.10:FF:000216">
    <property type="entry name" value="Putative calmodulin"/>
    <property type="match status" value="1"/>
</dbReference>
<dbReference type="Gene3D" id="1.10.238.10">
    <property type="entry name" value="EF-hand"/>
    <property type="match status" value="2"/>
</dbReference>
<dbReference type="InterPro" id="IPR050230">
    <property type="entry name" value="CALM/Myosin/TropC-like"/>
</dbReference>
<dbReference type="InterPro" id="IPR011992">
    <property type="entry name" value="EF-hand-dom_pair"/>
</dbReference>
<dbReference type="InterPro" id="IPR002048">
    <property type="entry name" value="EF_hand_dom"/>
</dbReference>
<dbReference type="PANTHER" id="PTHR23048:SF45">
    <property type="entry name" value="CALMODULIN LIKE 4"/>
    <property type="match status" value="1"/>
</dbReference>
<dbReference type="PANTHER" id="PTHR23048">
    <property type="entry name" value="MYOSIN LIGHT CHAIN 1, 3"/>
    <property type="match status" value="1"/>
</dbReference>
<dbReference type="Pfam" id="PF13405">
    <property type="entry name" value="EF-hand_6"/>
    <property type="match status" value="1"/>
</dbReference>
<dbReference type="SMART" id="SM00054">
    <property type="entry name" value="EFh"/>
    <property type="match status" value="2"/>
</dbReference>
<dbReference type="SUPFAM" id="SSF47473">
    <property type="entry name" value="EF-hand"/>
    <property type="match status" value="1"/>
</dbReference>
<dbReference type="PROSITE" id="PS50222">
    <property type="entry name" value="EF_HAND_2"/>
    <property type="match status" value="2"/>
</dbReference>
<organism>
    <name type="scientific">Xenopus tropicalis</name>
    <name type="common">Western clawed frog</name>
    <name type="synonym">Silurana tropicalis</name>
    <dbReference type="NCBI Taxonomy" id="8364"/>
    <lineage>
        <taxon>Eukaryota</taxon>
        <taxon>Metazoa</taxon>
        <taxon>Chordata</taxon>
        <taxon>Craniata</taxon>
        <taxon>Vertebrata</taxon>
        <taxon>Euteleostomi</taxon>
        <taxon>Amphibia</taxon>
        <taxon>Batrachia</taxon>
        <taxon>Anura</taxon>
        <taxon>Pipoidea</taxon>
        <taxon>Pipidae</taxon>
        <taxon>Xenopodinae</taxon>
        <taxon>Xenopus</taxon>
        <taxon>Silurana</taxon>
    </lineage>
</organism>
<gene>
    <name type="primary">calml4</name>
</gene>
<reference key="1">
    <citation type="submission" date="2004-10" db="EMBL/GenBank/DDBJ databases">
        <authorList>
            <consortium name="NIH - Xenopus Gene Collection (XGC) project"/>
        </authorList>
    </citation>
    <scope>NUCLEOTIDE SEQUENCE [LARGE SCALE MRNA]</scope>
    <source>
        <tissue>Embryo</tissue>
    </source>
</reference>
<accession>Q5XGC7</accession>
<feature type="chain" id="PRO_0000314935" description="Calmodulin-like protein 4">
    <location>
        <begin position="1"/>
        <end position="153"/>
    </location>
</feature>
<feature type="domain" description="EF-hand 1" evidence="2">
    <location>
        <begin position="8"/>
        <end position="43"/>
    </location>
</feature>
<feature type="domain" description="EF-hand 2" evidence="3">
    <location>
        <begin position="44"/>
        <end position="79"/>
    </location>
</feature>
<feature type="domain" description="EF-hand 3" evidence="2">
    <location>
        <begin position="81"/>
        <end position="116"/>
    </location>
</feature>
<feature type="domain" description="EF-hand 4" evidence="3">
    <location>
        <begin position="117"/>
        <end position="152"/>
    </location>
</feature>
<proteinExistence type="evidence at transcript level"/>